<proteinExistence type="evidence at transcript level"/>
<name>CD8A_PONPY</name>
<organism>
    <name type="scientific">Pongo pygmaeus</name>
    <name type="common">Bornean orangutan</name>
    <dbReference type="NCBI Taxonomy" id="9600"/>
    <lineage>
        <taxon>Eukaryota</taxon>
        <taxon>Metazoa</taxon>
        <taxon>Chordata</taxon>
        <taxon>Craniata</taxon>
        <taxon>Vertebrata</taxon>
        <taxon>Euteleostomi</taxon>
        <taxon>Mammalia</taxon>
        <taxon>Eutheria</taxon>
        <taxon>Euarchontoglires</taxon>
        <taxon>Primates</taxon>
        <taxon>Haplorrhini</taxon>
        <taxon>Catarrhini</taxon>
        <taxon>Hominidae</taxon>
        <taxon>Pongo</taxon>
    </lineage>
</organism>
<feature type="signal peptide" evidence="1">
    <location>
        <begin position="1"/>
        <end position="21"/>
    </location>
</feature>
<feature type="chain" id="PRO_0000014640" description="T-cell surface glycoprotein CD8 alpha chain">
    <location>
        <begin position="22"/>
        <end position="198"/>
    </location>
</feature>
<feature type="topological domain" description="Extracellular" evidence="3">
    <location>
        <begin position="22"/>
        <end position="145"/>
    </location>
</feature>
<feature type="transmembrane region" description="Helical" evidence="3">
    <location>
        <begin position="146"/>
        <end position="166"/>
    </location>
</feature>
<feature type="topological domain" description="Cytoplasmic" evidence="3">
    <location>
        <begin position="167"/>
        <end position="198"/>
    </location>
</feature>
<feature type="domain" description="Ig-like V-type">
    <location>
        <begin position="22"/>
        <end position="135"/>
    </location>
</feature>
<feature type="lipid moiety-binding region" description="S-palmitoyl cysteine" evidence="2">
    <location>
        <position position="169"/>
    </location>
</feature>
<feature type="disulfide bond" evidence="4">
    <location>
        <begin position="43"/>
        <end position="115"/>
    </location>
</feature>
<keyword id="KW-1064">Adaptive immunity</keyword>
<keyword id="KW-1003">Cell membrane</keyword>
<keyword id="KW-1015">Disulfide bond</keyword>
<keyword id="KW-0325">Glycoprotein</keyword>
<keyword id="KW-0391">Immunity</keyword>
<keyword id="KW-0393">Immunoglobulin domain</keyword>
<keyword id="KW-0449">Lipoprotein</keyword>
<keyword id="KW-0472">Membrane</keyword>
<keyword id="KW-0564">Palmitate</keyword>
<keyword id="KW-0732">Signal</keyword>
<keyword id="KW-0812">Transmembrane</keyword>
<keyword id="KW-1133">Transmembrane helix</keyword>
<accession>P30433</accession>
<reference key="1">
    <citation type="journal article" date="1992" name="Immunogenetics">
        <title>Structure of CD8 alpha and beta chains of the orangutan: novel patterns of mRNA splicing encoding hingeless polypeptides.</title>
        <authorList>
            <person name="Lawlor D.A."/>
            <person name="Parham P."/>
        </authorList>
    </citation>
    <scope>NUCLEOTIDE SEQUENCE [MRNA]</scope>
    <source>
        <strain>Isolate Jari</strain>
    </source>
</reference>
<protein>
    <recommendedName>
        <fullName>T-cell surface glycoprotein CD8 alpha chain</fullName>
    </recommendedName>
    <alternativeName>
        <fullName>T-lymphocyte differentiation antigen T8/Leu-2</fullName>
    </alternativeName>
    <cdAntigenName>CD8a</cdAntigenName>
</protein>
<comment type="function">
    <text evidence="2">Integral membrane glycoprotein that plays an essential role in the immune response and serves multiple functions in responses against both external and internal offenses. In T-cells, functions primarily as a coreceptor for MHC class I molecule:peptide complex. The antigens presented by class I peptides are derived from cytosolic proteins while class II derived from extracellular proteins. Interacts simultaneously with the T-cell receptor (TCR) and the MHC class I proteins presented by antigen presenting cells (APCs). In turn, recruits the Src kinase LCK to the vicinity of the TCR-CD3 complex. LCK then initiates different intracellular signaling pathways by phosphorylating various substrates ultimately leading to lymphokine production, motility, adhesion and activation of cytotoxic T-lymphocytes (CTLs). This mechanism enables CTLs to recognize and eliminate infected cells and tumor cells. In NK-cells, the presence of CD8A homodimers at the cell surface provides a survival mechanism allowing conjugation and lysis of multiple target cells. CD8A homodimer molecules also promote the survival and differentiation of activated lymphocytes into memory CD8 T-cells.</text>
</comment>
<comment type="subunit">
    <text evidence="2">Forms disulfide-linked heterodimers with CD8B at the cell surface. Also forms homodimers in several cell types including NK-cells or peripheral blood T-lymphocytes. Interacts with the MHC class I HLA-A/B2M dimer. Interacts with LCK in a zinc-dependent manner.</text>
</comment>
<comment type="subcellular location">
    <subcellularLocation>
        <location evidence="2">Cell membrane</location>
        <topology evidence="2">Single-pass type I membrane protein</topology>
    </subcellularLocation>
    <text evidence="2">CD8A localizes to lipid rafts only when associated with its partner CD8B.</text>
</comment>
<comment type="PTM">
    <text evidence="2">Palmitoylated, but association with CD8B seems to be more important for the enrichment of CD8A in lipid rafts.</text>
</comment>
<comment type="PTM">
    <text evidence="2">O-glycosylated.</text>
</comment>
<comment type="PTM">
    <text evidence="2">Phosphorylated in cytotoxic T-lymphocytes (CTLs) following activation.</text>
</comment>
<evidence type="ECO:0000250" key="1"/>
<evidence type="ECO:0000250" key="2">
    <source>
        <dbReference type="UniProtKB" id="P01732"/>
    </source>
</evidence>
<evidence type="ECO:0000255" key="3"/>
<evidence type="ECO:0000255" key="4">
    <source>
        <dbReference type="PROSITE-ProRule" id="PRU00114"/>
    </source>
</evidence>
<gene>
    <name type="primary">CD8A</name>
</gene>
<sequence>MALPVTALLLPLALLLHAARPSQFRVSPLDRTWNLGETVELKCQVLLSNPTSGCSWLFQPRGAAASPTFLLYLSQNKPKAAEGLDTQRFSGKRLGDTFVLTLSDFRRENEGYYFCSALSNSIMYFSHFVPVFLPVHTRGLDFACDIYIWAPLAGTCGVLLLSLVITLYCNHRNRRRVCKCPRPVVKSGGKPSLSERYV</sequence>
<dbReference type="EMBL" id="X60223">
    <property type="protein sequence ID" value="CAA42784.1"/>
    <property type="molecule type" value="mRNA"/>
</dbReference>
<dbReference type="PIR" id="S25656">
    <property type="entry name" value="S25656"/>
</dbReference>
<dbReference type="SMR" id="P30433"/>
<dbReference type="GO" id="GO:0009897">
    <property type="term" value="C:external side of plasma membrane"/>
    <property type="evidence" value="ECO:0007669"/>
    <property type="project" value="TreeGrafter"/>
</dbReference>
<dbReference type="GO" id="GO:0007166">
    <property type="term" value="P:cell surface receptor signaling pathway"/>
    <property type="evidence" value="ECO:0007669"/>
    <property type="project" value="TreeGrafter"/>
</dbReference>
<dbReference type="GO" id="GO:0045065">
    <property type="term" value="P:cytotoxic T cell differentiation"/>
    <property type="evidence" value="ECO:0007669"/>
    <property type="project" value="TreeGrafter"/>
</dbReference>
<dbReference type="GO" id="GO:0002456">
    <property type="term" value="P:T cell mediated immunity"/>
    <property type="evidence" value="ECO:0007669"/>
    <property type="project" value="TreeGrafter"/>
</dbReference>
<dbReference type="CDD" id="cd05720">
    <property type="entry name" value="IgV_CD8_alpha"/>
    <property type="match status" value="1"/>
</dbReference>
<dbReference type="FunFam" id="2.60.40.10:FF:000956">
    <property type="entry name" value="T-cell surface glycoprotein CD8 alpha chain"/>
    <property type="match status" value="1"/>
</dbReference>
<dbReference type="Gene3D" id="2.60.40.10">
    <property type="entry name" value="Immunoglobulins"/>
    <property type="match status" value="1"/>
</dbReference>
<dbReference type="InterPro" id="IPR015468">
    <property type="entry name" value="CD8_asu"/>
</dbReference>
<dbReference type="InterPro" id="IPR007110">
    <property type="entry name" value="Ig-like_dom"/>
</dbReference>
<dbReference type="InterPro" id="IPR036179">
    <property type="entry name" value="Ig-like_dom_sf"/>
</dbReference>
<dbReference type="InterPro" id="IPR013783">
    <property type="entry name" value="Ig-like_fold"/>
</dbReference>
<dbReference type="InterPro" id="IPR003599">
    <property type="entry name" value="Ig_sub"/>
</dbReference>
<dbReference type="InterPro" id="IPR013106">
    <property type="entry name" value="Ig_V-set"/>
</dbReference>
<dbReference type="PANTHER" id="PTHR10441">
    <property type="entry name" value="CD8 ALPHA CHAIN"/>
    <property type="match status" value="1"/>
</dbReference>
<dbReference type="PANTHER" id="PTHR10441:SF2">
    <property type="entry name" value="T-CELL SURFACE GLYCOPROTEIN CD8 ALPHA CHAIN"/>
    <property type="match status" value="1"/>
</dbReference>
<dbReference type="Pfam" id="PF07686">
    <property type="entry name" value="V-set"/>
    <property type="match status" value="1"/>
</dbReference>
<dbReference type="SMART" id="SM00409">
    <property type="entry name" value="IG"/>
    <property type="match status" value="1"/>
</dbReference>
<dbReference type="SMART" id="SM00406">
    <property type="entry name" value="IGv"/>
    <property type="match status" value="1"/>
</dbReference>
<dbReference type="SUPFAM" id="SSF48726">
    <property type="entry name" value="Immunoglobulin"/>
    <property type="match status" value="1"/>
</dbReference>
<dbReference type="PROSITE" id="PS50835">
    <property type="entry name" value="IG_LIKE"/>
    <property type="match status" value="1"/>
</dbReference>